<organism evidence="11">
    <name type="scientific">Drosophila melanogaster</name>
    <name type="common">Fruit fly</name>
    <dbReference type="NCBI Taxonomy" id="7227"/>
    <lineage>
        <taxon>Eukaryota</taxon>
        <taxon>Metazoa</taxon>
        <taxon>Ecdysozoa</taxon>
        <taxon>Arthropoda</taxon>
        <taxon>Hexapoda</taxon>
        <taxon>Insecta</taxon>
        <taxon>Pterygota</taxon>
        <taxon>Neoptera</taxon>
        <taxon>Endopterygota</taxon>
        <taxon>Diptera</taxon>
        <taxon>Brachycera</taxon>
        <taxon>Muscomorpha</taxon>
        <taxon>Ephydroidea</taxon>
        <taxon>Drosophilidae</taxon>
        <taxon>Drosophila</taxon>
        <taxon>Sophophora</taxon>
    </lineage>
</organism>
<feature type="chain" id="PRO_0000445230" description="REPTOR-binding partner">
    <location>
        <begin position="1"/>
        <end position="118"/>
    </location>
</feature>
<feature type="domain" description="bZIP" evidence="1">
    <location>
        <begin position="40"/>
        <end position="90"/>
    </location>
</feature>
<feature type="region of interest" description="Disordered" evidence="2">
    <location>
        <begin position="1"/>
        <end position="53"/>
    </location>
</feature>
<feature type="region of interest" description="Basic motif" evidence="1">
    <location>
        <begin position="40"/>
        <end position="77"/>
    </location>
</feature>
<feature type="region of interest" description="Leucine-zipper" evidence="1">
    <location>
        <begin position="82"/>
        <end position="89"/>
    </location>
</feature>
<feature type="compositionally biased region" description="Polar residues" evidence="2">
    <location>
        <begin position="1"/>
        <end position="20"/>
    </location>
</feature>
<feature type="compositionally biased region" description="Basic and acidic residues" evidence="2">
    <location>
        <begin position="36"/>
        <end position="53"/>
    </location>
</feature>
<feature type="splice variant" id="VSP_059825" description="In isoform B and isoform C." evidence="5">
    <location>
        <position position="20"/>
    </location>
</feature>
<feature type="splice variant" id="VSP_059826" description="In isoform C and isoform D." evidence="5">
    <original>LIQWNN</original>
    <variation>VVNSME</variation>
    <location>
        <begin position="89"/>
        <end position="94"/>
    </location>
</feature>
<feature type="splice variant" id="VSP_059827" description="In isoform C and isoform D." evidence="5">
    <location>
        <begin position="95"/>
        <end position="118"/>
    </location>
</feature>
<gene>
    <name evidence="4 10" type="primary">REPTOR-BP</name>
    <name evidence="10" type="ORF">CG18619</name>
</gene>
<sequence length="118" mass="13852">MADMEIQSNKMSITEETQVQTRKECGKRGRKPGRKTSTEKLDMKAKLERSRQSARECRARKKLRYQYLEELVADREKAVVALRTELERLIQWNNQLSESNTPTNNDQLLQELGILKQE</sequence>
<name>RTBP_DROME</name>
<accession>Q9VL14</accession>
<accession>Q8IPC6</accession>
<accession>Q8IPC7</accession>
<accession>Q8MYS1</accession>
<proteinExistence type="evidence at protein level"/>
<keyword id="KW-0010">Activator</keyword>
<keyword id="KW-0025">Alternative splicing</keyword>
<keyword id="KW-0158">Chromosome</keyword>
<keyword id="KW-0238">DNA-binding</keyword>
<keyword id="KW-0539">Nucleus</keyword>
<keyword id="KW-1185">Reference proteome</keyword>
<keyword id="KW-0804">Transcription</keyword>
<keyword id="KW-0805">Transcription regulation</keyword>
<protein>
    <recommendedName>
        <fullName evidence="4">REPTOR-binding partner</fullName>
    </recommendedName>
</protein>
<reference evidence="11" key="1">
    <citation type="journal article" date="2000" name="Science">
        <title>The genome sequence of Drosophila melanogaster.</title>
        <authorList>
            <person name="Adams M.D."/>
            <person name="Celniker S.E."/>
            <person name="Holt R.A."/>
            <person name="Evans C.A."/>
            <person name="Gocayne J.D."/>
            <person name="Amanatides P.G."/>
            <person name="Scherer S.E."/>
            <person name="Li P.W."/>
            <person name="Hoskins R.A."/>
            <person name="Galle R.F."/>
            <person name="George R.A."/>
            <person name="Lewis S.E."/>
            <person name="Richards S."/>
            <person name="Ashburner M."/>
            <person name="Henderson S.N."/>
            <person name="Sutton G.G."/>
            <person name="Wortman J.R."/>
            <person name="Yandell M.D."/>
            <person name="Zhang Q."/>
            <person name="Chen L.X."/>
            <person name="Brandon R.C."/>
            <person name="Rogers Y.-H.C."/>
            <person name="Blazej R.G."/>
            <person name="Champe M."/>
            <person name="Pfeiffer B.D."/>
            <person name="Wan K.H."/>
            <person name="Doyle C."/>
            <person name="Baxter E.G."/>
            <person name="Helt G."/>
            <person name="Nelson C.R."/>
            <person name="Miklos G.L.G."/>
            <person name="Abril J.F."/>
            <person name="Agbayani A."/>
            <person name="An H.-J."/>
            <person name="Andrews-Pfannkoch C."/>
            <person name="Baldwin D."/>
            <person name="Ballew R.M."/>
            <person name="Basu A."/>
            <person name="Baxendale J."/>
            <person name="Bayraktaroglu L."/>
            <person name="Beasley E.M."/>
            <person name="Beeson K.Y."/>
            <person name="Benos P.V."/>
            <person name="Berman B.P."/>
            <person name="Bhandari D."/>
            <person name="Bolshakov S."/>
            <person name="Borkova D."/>
            <person name="Botchan M.R."/>
            <person name="Bouck J."/>
            <person name="Brokstein P."/>
            <person name="Brottier P."/>
            <person name="Burtis K.C."/>
            <person name="Busam D.A."/>
            <person name="Butler H."/>
            <person name="Cadieu E."/>
            <person name="Center A."/>
            <person name="Chandra I."/>
            <person name="Cherry J.M."/>
            <person name="Cawley S."/>
            <person name="Dahlke C."/>
            <person name="Davenport L.B."/>
            <person name="Davies P."/>
            <person name="de Pablos B."/>
            <person name="Delcher A."/>
            <person name="Deng Z."/>
            <person name="Mays A.D."/>
            <person name="Dew I."/>
            <person name="Dietz S.M."/>
            <person name="Dodson K."/>
            <person name="Doup L.E."/>
            <person name="Downes M."/>
            <person name="Dugan-Rocha S."/>
            <person name="Dunkov B.C."/>
            <person name="Dunn P."/>
            <person name="Durbin K.J."/>
            <person name="Evangelista C.C."/>
            <person name="Ferraz C."/>
            <person name="Ferriera S."/>
            <person name="Fleischmann W."/>
            <person name="Fosler C."/>
            <person name="Gabrielian A.E."/>
            <person name="Garg N.S."/>
            <person name="Gelbart W.M."/>
            <person name="Glasser K."/>
            <person name="Glodek A."/>
            <person name="Gong F."/>
            <person name="Gorrell J.H."/>
            <person name="Gu Z."/>
            <person name="Guan P."/>
            <person name="Harris M."/>
            <person name="Harris N.L."/>
            <person name="Harvey D.A."/>
            <person name="Heiman T.J."/>
            <person name="Hernandez J.R."/>
            <person name="Houck J."/>
            <person name="Hostin D."/>
            <person name="Houston K.A."/>
            <person name="Howland T.J."/>
            <person name="Wei M.-H."/>
            <person name="Ibegwam C."/>
            <person name="Jalali M."/>
            <person name="Kalush F."/>
            <person name="Karpen G.H."/>
            <person name="Ke Z."/>
            <person name="Kennison J.A."/>
            <person name="Ketchum K.A."/>
            <person name="Kimmel B.E."/>
            <person name="Kodira C.D."/>
            <person name="Kraft C.L."/>
            <person name="Kravitz S."/>
            <person name="Kulp D."/>
            <person name="Lai Z."/>
            <person name="Lasko P."/>
            <person name="Lei Y."/>
            <person name="Levitsky A.A."/>
            <person name="Li J.H."/>
            <person name="Li Z."/>
            <person name="Liang Y."/>
            <person name="Lin X."/>
            <person name="Liu X."/>
            <person name="Mattei B."/>
            <person name="McIntosh T.C."/>
            <person name="McLeod M.P."/>
            <person name="McPherson D."/>
            <person name="Merkulov G."/>
            <person name="Milshina N.V."/>
            <person name="Mobarry C."/>
            <person name="Morris J."/>
            <person name="Moshrefi A."/>
            <person name="Mount S.M."/>
            <person name="Moy M."/>
            <person name="Murphy B."/>
            <person name="Murphy L."/>
            <person name="Muzny D.M."/>
            <person name="Nelson D.L."/>
            <person name="Nelson D.R."/>
            <person name="Nelson K.A."/>
            <person name="Nixon K."/>
            <person name="Nusskern D.R."/>
            <person name="Pacleb J.M."/>
            <person name="Palazzolo M."/>
            <person name="Pittman G.S."/>
            <person name="Pan S."/>
            <person name="Pollard J."/>
            <person name="Puri V."/>
            <person name="Reese M.G."/>
            <person name="Reinert K."/>
            <person name="Remington K."/>
            <person name="Saunders R.D.C."/>
            <person name="Scheeler F."/>
            <person name="Shen H."/>
            <person name="Shue B.C."/>
            <person name="Siden-Kiamos I."/>
            <person name="Simpson M."/>
            <person name="Skupski M.P."/>
            <person name="Smith T.J."/>
            <person name="Spier E."/>
            <person name="Spradling A.C."/>
            <person name="Stapleton M."/>
            <person name="Strong R."/>
            <person name="Sun E."/>
            <person name="Svirskas R."/>
            <person name="Tector C."/>
            <person name="Turner R."/>
            <person name="Venter E."/>
            <person name="Wang A.H."/>
            <person name="Wang X."/>
            <person name="Wang Z.-Y."/>
            <person name="Wassarman D.A."/>
            <person name="Weinstock G.M."/>
            <person name="Weissenbach J."/>
            <person name="Williams S.M."/>
            <person name="Woodage T."/>
            <person name="Worley K.C."/>
            <person name="Wu D."/>
            <person name="Yang S."/>
            <person name="Yao Q.A."/>
            <person name="Ye J."/>
            <person name="Yeh R.-F."/>
            <person name="Zaveri J.S."/>
            <person name="Zhan M."/>
            <person name="Zhang G."/>
            <person name="Zhao Q."/>
            <person name="Zheng L."/>
            <person name="Zheng X.H."/>
            <person name="Zhong F.N."/>
            <person name="Zhong W."/>
            <person name="Zhou X."/>
            <person name="Zhu S.C."/>
            <person name="Zhu X."/>
            <person name="Smith H.O."/>
            <person name="Gibbs R.A."/>
            <person name="Myers E.W."/>
            <person name="Rubin G.M."/>
            <person name="Venter J.C."/>
        </authorList>
    </citation>
    <scope>NUCLEOTIDE SEQUENCE [LARGE SCALE GENOMIC DNA]</scope>
    <source>
        <strain evidence="11">Berkeley</strain>
    </source>
</reference>
<reference evidence="11" key="2">
    <citation type="journal article" date="2002" name="Genome Biol.">
        <title>Annotation of the Drosophila melanogaster euchromatic genome: a systematic review.</title>
        <authorList>
            <person name="Misra S."/>
            <person name="Crosby M.A."/>
            <person name="Mungall C.J."/>
            <person name="Matthews B.B."/>
            <person name="Campbell K.S."/>
            <person name="Hradecky P."/>
            <person name="Huang Y."/>
            <person name="Kaminker J.S."/>
            <person name="Millburn G.H."/>
            <person name="Prochnik S.E."/>
            <person name="Smith C.D."/>
            <person name="Tupy J.L."/>
            <person name="Whitfield E.J."/>
            <person name="Bayraktaroglu L."/>
            <person name="Berman B.P."/>
            <person name="Bettencourt B.R."/>
            <person name="Celniker S.E."/>
            <person name="de Grey A.D.N.J."/>
            <person name="Drysdale R.A."/>
            <person name="Harris N.L."/>
            <person name="Richter J."/>
            <person name="Russo S."/>
            <person name="Schroeder A.J."/>
            <person name="Shu S.Q."/>
            <person name="Stapleton M."/>
            <person name="Yamada C."/>
            <person name="Ashburner M."/>
            <person name="Gelbart W.M."/>
            <person name="Rubin G.M."/>
            <person name="Lewis S.E."/>
        </authorList>
    </citation>
    <scope>NUCLEOTIDE SEQUENCE [LARGE SCALE GENOMIC DNA]</scope>
    <source>
        <strain evidence="11">Berkeley</strain>
    </source>
</reference>
<reference evidence="6" key="3">
    <citation type="journal article" date="2002" name="Genome Biol.">
        <title>A Drosophila full-length cDNA resource.</title>
        <authorList>
            <person name="Stapleton M."/>
            <person name="Carlson J.W."/>
            <person name="Brokstein P."/>
            <person name="Yu C."/>
            <person name="Champe M."/>
            <person name="George R.A."/>
            <person name="Guarin H."/>
            <person name="Kronmiller B."/>
            <person name="Pacleb J.M."/>
            <person name="Park S."/>
            <person name="Wan K.H."/>
            <person name="Rubin G.M."/>
            <person name="Celniker S.E."/>
        </authorList>
    </citation>
    <scope>NUCLEOTIDE SEQUENCE [LARGE SCALE MRNA] (ISOFORM B)</scope>
    <source>
        <strain evidence="6">Berkeley</strain>
        <tissue evidence="6">Head</tissue>
    </source>
</reference>
<reference evidence="7 8 9" key="4">
    <citation type="submission" date="2016-07" db="EMBL/GenBank/DDBJ databases">
        <authorList>
            <person name="Carlson J."/>
            <person name="Booth B."/>
            <person name="Frise E."/>
            <person name="Park S."/>
            <person name="Wan K."/>
            <person name="Yu C."/>
            <person name="Celniker S."/>
            <person name="Florea S."/>
            <person name="Webb J.S."/>
            <person name="Jaromczyk J."/>
            <person name="Schardl C.L."/>
        </authorList>
    </citation>
    <scope>NUCLEOTIDE SEQUENCE [LARGE SCALE MRNA] (ISOFORMS B; C AND D)</scope>
    <source>
        <strain evidence="7 8 9">Berkeley</strain>
        <tissue evidence="7 8">Embryo</tissue>
    </source>
</reference>
<reference evidence="5" key="5">
    <citation type="journal article" date="2015" name="Dev. Cell">
        <title>REPTOR and REPTOR-BP regulate organismal metabolism and transcription downstream of TORC1.</title>
        <authorList>
            <person name="Tiebe M."/>
            <person name="Lutz M."/>
            <person name="De La Garza A."/>
            <person name="Buechling T."/>
            <person name="Boutros M."/>
            <person name="Teleman A.A."/>
        </authorList>
    </citation>
    <scope>FUNCTION</scope>
    <scope>SUBUNIT</scope>
    <scope>INTERACTION WITH REPTOR</scope>
    <scope>SUBCELLULAR LOCATION</scope>
    <scope>DISRUPTION PHENOTYPE</scope>
</reference>
<dbReference type="EMBL" id="AE014134">
    <property type="protein sequence ID" value="AAF52891.2"/>
    <property type="molecule type" value="Genomic_DNA"/>
</dbReference>
<dbReference type="EMBL" id="AE014134">
    <property type="protein sequence ID" value="AAN10733.1"/>
    <property type="molecule type" value="Genomic_DNA"/>
</dbReference>
<dbReference type="EMBL" id="AE014134">
    <property type="protein sequence ID" value="AAN10734.1"/>
    <property type="molecule type" value="Genomic_DNA"/>
</dbReference>
<dbReference type="EMBL" id="AE014134">
    <property type="protein sequence ID" value="AAN10735.1"/>
    <property type="molecule type" value="Genomic_DNA"/>
</dbReference>
<dbReference type="EMBL" id="AY113639">
    <property type="protein sequence ID" value="AAM29644.1"/>
    <property type="molecule type" value="mRNA"/>
</dbReference>
<dbReference type="EMBL" id="BT100178">
    <property type="protein sequence ID" value="ACY38293.1"/>
    <property type="molecule type" value="mRNA"/>
</dbReference>
<dbReference type="EMBL" id="BT100179">
    <property type="protein sequence ID" value="ACY38294.1"/>
    <property type="molecule type" value="mRNA"/>
</dbReference>
<dbReference type="EMBL" id="KX531638">
    <property type="protein sequence ID" value="ANY27448.1"/>
    <property type="molecule type" value="mRNA"/>
</dbReference>
<dbReference type="RefSeq" id="NP_609363.1">
    <molecule id="Q9VL14-1"/>
    <property type="nucleotide sequence ID" value="NM_135519.3"/>
</dbReference>
<dbReference type="RefSeq" id="NP_723546.1">
    <molecule id="Q9VL14-2"/>
    <property type="nucleotide sequence ID" value="NM_164903.2"/>
</dbReference>
<dbReference type="RefSeq" id="NP_723547.1">
    <molecule id="Q9VL14-4"/>
    <property type="nucleotide sequence ID" value="NM_164904.2"/>
</dbReference>
<dbReference type="RefSeq" id="NP_723548.1">
    <molecule id="Q9VL14-3"/>
    <property type="nucleotide sequence ID" value="NM_164905.3"/>
</dbReference>
<dbReference type="SMR" id="Q9VL14"/>
<dbReference type="FunCoup" id="Q9VL14">
    <property type="interactions" value="686"/>
</dbReference>
<dbReference type="IntAct" id="Q9VL14">
    <property type="interactions" value="24"/>
</dbReference>
<dbReference type="STRING" id="7227.FBpp0088679"/>
<dbReference type="PaxDb" id="7227-FBpp0088679"/>
<dbReference type="DNASU" id="34371"/>
<dbReference type="EnsemblMetazoa" id="FBtr0089735">
    <molecule id="Q9VL14-4"/>
    <property type="protein sequence ID" value="FBpp0088676"/>
    <property type="gene ID" value="FBgn0032202"/>
</dbReference>
<dbReference type="EnsemblMetazoa" id="FBtr0089736">
    <molecule id="Q9VL14-3"/>
    <property type="protein sequence ID" value="FBpp0088677"/>
    <property type="gene ID" value="FBgn0032202"/>
</dbReference>
<dbReference type="EnsemblMetazoa" id="FBtr0089737">
    <molecule id="Q9VL14-2"/>
    <property type="protein sequence ID" value="FBpp0088678"/>
    <property type="gene ID" value="FBgn0032202"/>
</dbReference>
<dbReference type="EnsemblMetazoa" id="FBtr0089738">
    <molecule id="Q9VL14-1"/>
    <property type="protein sequence ID" value="FBpp0088679"/>
    <property type="gene ID" value="FBgn0032202"/>
</dbReference>
<dbReference type="GeneID" id="34371"/>
<dbReference type="KEGG" id="dme:Dmel_CG18619"/>
<dbReference type="UCSC" id="CG18619-RA">
    <molecule id="Q9VL14-1"/>
    <property type="organism name" value="d. melanogaster"/>
</dbReference>
<dbReference type="UCSC" id="CG18619-RB">
    <property type="organism name" value="d. melanogaster"/>
</dbReference>
<dbReference type="UCSC" id="CG18619-RC">
    <property type="organism name" value="d. melanogaster"/>
</dbReference>
<dbReference type="UCSC" id="CG18619-RD">
    <property type="organism name" value="d. melanogaster"/>
</dbReference>
<dbReference type="AGR" id="FB:FBgn0032202"/>
<dbReference type="CTD" id="34371"/>
<dbReference type="FlyBase" id="FBgn0032202">
    <property type="gene designation" value="REPTOR-BP"/>
</dbReference>
<dbReference type="VEuPathDB" id="VectorBase:FBgn0032202"/>
<dbReference type="eggNOG" id="KOG4515">
    <property type="taxonomic scope" value="Eukaryota"/>
</dbReference>
<dbReference type="GeneTree" id="ENSGT00390000005388"/>
<dbReference type="HOGENOM" id="CLU_134161_2_0_1"/>
<dbReference type="InParanoid" id="Q9VL14"/>
<dbReference type="OMA" id="DKYYKWN"/>
<dbReference type="OrthoDB" id="5984119at2759"/>
<dbReference type="PhylomeDB" id="Q9VL14"/>
<dbReference type="SignaLink" id="Q9VL14"/>
<dbReference type="BioGRID-ORCS" id="34371">
    <property type="hits" value="0 hits in 1 CRISPR screen"/>
</dbReference>
<dbReference type="GenomeRNAi" id="34371"/>
<dbReference type="PRO" id="PR:Q9VL14"/>
<dbReference type="Proteomes" id="UP000000803">
    <property type="component" value="Chromosome 2L"/>
</dbReference>
<dbReference type="Bgee" id="FBgn0032202">
    <property type="expression patterns" value="Expressed in spermathecum and 251 other cell types or tissues"/>
</dbReference>
<dbReference type="ExpressionAtlas" id="Q9VL14">
    <property type="expression patterns" value="baseline and differential"/>
</dbReference>
<dbReference type="GO" id="GO:0005694">
    <property type="term" value="C:chromosome"/>
    <property type="evidence" value="ECO:0007669"/>
    <property type="project" value="UniProtKB-SubCell"/>
</dbReference>
<dbReference type="GO" id="GO:0005634">
    <property type="term" value="C:nucleus"/>
    <property type="evidence" value="ECO:0000314"/>
    <property type="project" value="FlyBase"/>
</dbReference>
<dbReference type="GO" id="GO:0003682">
    <property type="term" value="F:chromatin binding"/>
    <property type="evidence" value="ECO:0000314"/>
    <property type="project" value="FlyBase"/>
</dbReference>
<dbReference type="GO" id="GO:0003677">
    <property type="term" value="F:DNA binding"/>
    <property type="evidence" value="ECO:0007669"/>
    <property type="project" value="UniProtKB-KW"/>
</dbReference>
<dbReference type="GO" id="GO:0003700">
    <property type="term" value="F:DNA-binding transcription factor activity"/>
    <property type="evidence" value="ECO:0007669"/>
    <property type="project" value="InterPro"/>
</dbReference>
<dbReference type="GO" id="GO:0046982">
    <property type="term" value="F:protein heterodimerization activity"/>
    <property type="evidence" value="ECO:0000353"/>
    <property type="project" value="FlyBase"/>
</dbReference>
<dbReference type="GO" id="GO:0042803">
    <property type="term" value="F:protein homodimerization activity"/>
    <property type="evidence" value="ECO:0000314"/>
    <property type="project" value="FlyBase"/>
</dbReference>
<dbReference type="GO" id="GO:0045893">
    <property type="term" value="P:positive regulation of DNA-templated transcription"/>
    <property type="evidence" value="ECO:0000315"/>
    <property type="project" value="FlyBase"/>
</dbReference>
<dbReference type="GO" id="GO:0006355">
    <property type="term" value="P:regulation of DNA-templated transcription"/>
    <property type="evidence" value="ECO:0000318"/>
    <property type="project" value="GO_Central"/>
</dbReference>
<dbReference type="GO" id="GO:0042594">
    <property type="term" value="P:response to starvation"/>
    <property type="evidence" value="ECO:0000315"/>
    <property type="project" value="FlyBase"/>
</dbReference>
<dbReference type="GO" id="GO:0038202">
    <property type="term" value="P:TORC1 signaling"/>
    <property type="evidence" value="ECO:0000315"/>
    <property type="project" value="FlyBase"/>
</dbReference>
<dbReference type="CDD" id="cd14709">
    <property type="entry name" value="bZIP_CREBL2"/>
    <property type="match status" value="1"/>
</dbReference>
<dbReference type="Gene3D" id="1.20.5.170">
    <property type="match status" value="1"/>
</dbReference>
<dbReference type="InterPro" id="IPR004827">
    <property type="entry name" value="bZIP"/>
</dbReference>
<dbReference type="InterPro" id="IPR046347">
    <property type="entry name" value="bZIP_sf"/>
</dbReference>
<dbReference type="InterPro" id="IPR039250">
    <property type="entry name" value="CREBL2/REPTOR-BP"/>
</dbReference>
<dbReference type="PANTHER" id="PTHR21051">
    <property type="entry name" value="CAMP-RESPONSIVE ELEMENT-BINDING PROTEIN-LIKE 2"/>
    <property type="match status" value="1"/>
</dbReference>
<dbReference type="PANTHER" id="PTHR21051:SF4">
    <property type="entry name" value="CAMP-RESPONSIVE ELEMENT-BINDING PROTEIN-LIKE 2"/>
    <property type="match status" value="1"/>
</dbReference>
<dbReference type="Pfam" id="PF07716">
    <property type="entry name" value="bZIP_2"/>
    <property type="match status" value="1"/>
</dbReference>
<dbReference type="SUPFAM" id="SSF57959">
    <property type="entry name" value="Leucine zipper domain"/>
    <property type="match status" value="1"/>
</dbReference>
<evidence type="ECO:0000255" key="1">
    <source>
        <dbReference type="PROSITE-ProRule" id="PRU00978"/>
    </source>
</evidence>
<evidence type="ECO:0000256" key="2">
    <source>
        <dbReference type="SAM" id="MobiDB-lite"/>
    </source>
</evidence>
<evidence type="ECO:0000269" key="3">
    <source>
    </source>
</evidence>
<evidence type="ECO:0000303" key="4">
    <source>
    </source>
</evidence>
<evidence type="ECO:0000305" key="5"/>
<evidence type="ECO:0000312" key="6">
    <source>
        <dbReference type="EMBL" id="AAM29644.1"/>
    </source>
</evidence>
<evidence type="ECO:0000312" key="7">
    <source>
        <dbReference type="EMBL" id="ACY38293.1"/>
    </source>
</evidence>
<evidence type="ECO:0000312" key="8">
    <source>
        <dbReference type="EMBL" id="ACY38294.1"/>
    </source>
</evidence>
<evidence type="ECO:0000312" key="9">
    <source>
        <dbReference type="EMBL" id="ANY27448.1"/>
    </source>
</evidence>
<evidence type="ECO:0000312" key="10">
    <source>
        <dbReference type="FlyBase" id="FBgn0032202"/>
    </source>
</evidence>
<evidence type="ECO:0000312" key="11">
    <source>
        <dbReference type="Proteomes" id="UP000000803"/>
    </source>
</evidence>
<comment type="function">
    <text evidence="3">Transcriptional regulator that acts in the TORC1 signaling pathway to regulate energy homeostasis and promote survival during nutrient deprivation. Interacts with REPTOR to form a transcriptional activator complex that functions downstream of TORC1 to up-regulate the expression of most target genes induced by TORC1 inhibition. In the complex, acts to enhance the binding of the transcriptional activator REPTOR to the regulatory sequences of target genes. Under normal conditions TORC1 is active, inhibiting the formation of the REPTOR/REPTOR-BP complex by phosphorylating REPTOR and mediates its cytoplasmic retention by forming a docking site for 14-3-3 proteins. Upon TORC1 inhibition resulting from nutrient stress, REPTOR is recruited into the nucleus where it interacts with REPTOR-BP and together they maintain organismal metabolism by activating the expression of target stress response genes including those involved in glycogenesis and triglyceride biosynthesis. The complex also appears to negatively regulate some aspects of TORC1-dependent larval growth.</text>
</comment>
<comment type="subunit">
    <text evidence="3">Homodimer. Interacts (via C-terminus) with REPTOR (via C-terminus).</text>
</comment>
<comment type="subcellular location">
    <subcellularLocation>
        <location evidence="3">Nucleus</location>
    </subcellularLocation>
    <subcellularLocation>
        <location evidence="3">Chromosome</location>
    </subcellularLocation>
    <text evidence="3">Binds chromatin.</text>
</comment>
<comment type="alternative products">
    <event type="alternative splicing"/>
    <isoform>
        <id>Q9VL14-1</id>
        <name evidence="10">A</name>
        <sequence type="displayed"/>
    </isoform>
    <isoform>
        <id>Q9VL14-2</id>
        <name evidence="10">B</name>
        <sequence type="described" ref="VSP_059825"/>
    </isoform>
    <isoform>
        <id>Q9VL14-3</id>
        <name evidence="10">C</name>
        <sequence type="described" ref="VSP_059825 VSP_059826 VSP_059827"/>
    </isoform>
    <isoform>
        <id>Q9VL14-4</id>
        <name evidence="10">D</name>
        <sequence type="described" ref="VSP_059826 VSP_059827"/>
    </isoform>
</comment>
<comment type="disruption phenotype">
    <text evidence="3">Sensitive to nutrient stress. Larvae display no obvious phenotype under normal feeding conditions; larval growth and development is normal, and there is no effect on triglyceride and glycogen levels. However when mutants pupate and become adults they display reduced triglyceride and glycogen stores leading to adults dying within 18 hours of starvation whereas controls survive 2.5 days without food. Larvae are also sensitive to nutrient stress displaying 50% lethality when fed a low nutrient diet.</text>
</comment>
<comment type="similarity">
    <text evidence="5">Belongs to the bZIP family. ATF subfamily.</text>
</comment>